<gene>
    <name evidence="1" type="primary">rpsO</name>
    <name type="ordered locus">bsl0780</name>
</gene>
<evidence type="ECO:0000255" key="1">
    <source>
        <dbReference type="HAMAP-Rule" id="MF_01343"/>
    </source>
</evidence>
<evidence type="ECO:0000256" key="2">
    <source>
        <dbReference type="SAM" id="MobiDB-lite"/>
    </source>
</evidence>
<evidence type="ECO:0000305" key="3"/>
<reference key="1">
    <citation type="journal article" date="2002" name="DNA Res.">
        <title>Complete genomic sequence of nitrogen-fixing symbiotic bacterium Bradyrhizobium japonicum USDA110.</title>
        <authorList>
            <person name="Kaneko T."/>
            <person name="Nakamura Y."/>
            <person name="Sato S."/>
            <person name="Minamisawa K."/>
            <person name="Uchiumi T."/>
            <person name="Sasamoto S."/>
            <person name="Watanabe A."/>
            <person name="Idesawa K."/>
            <person name="Iriguchi M."/>
            <person name="Kawashima K."/>
            <person name="Kohara M."/>
            <person name="Matsumoto M."/>
            <person name="Shimpo S."/>
            <person name="Tsuruoka H."/>
            <person name="Wada T."/>
            <person name="Yamada M."/>
            <person name="Tabata S."/>
        </authorList>
    </citation>
    <scope>NUCLEOTIDE SEQUENCE [LARGE SCALE GENOMIC DNA]</scope>
    <source>
        <strain>JCM 10833 / BCRC 13528 / IAM 13628 / NBRC 14792 / USDA 110</strain>
    </source>
</reference>
<accession>Q89WB2</accession>
<proteinExistence type="inferred from homology"/>
<organism>
    <name type="scientific">Bradyrhizobium diazoefficiens (strain JCM 10833 / BCRC 13528 / IAM 13628 / NBRC 14792 / USDA 110)</name>
    <dbReference type="NCBI Taxonomy" id="224911"/>
    <lineage>
        <taxon>Bacteria</taxon>
        <taxon>Pseudomonadati</taxon>
        <taxon>Pseudomonadota</taxon>
        <taxon>Alphaproteobacteria</taxon>
        <taxon>Hyphomicrobiales</taxon>
        <taxon>Nitrobacteraceae</taxon>
        <taxon>Bradyrhizobium</taxon>
    </lineage>
</organism>
<protein>
    <recommendedName>
        <fullName evidence="1">Small ribosomal subunit protein uS15</fullName>
    </recommendedName>
    <alternativeName>
        <fullName evidence="3">30S ribosomal protein S15</fullName>
    </alternativeName>
</protein>
<comment type="function">
    <text evidence="1">One of the primary rRNA binding proteins, it binds directly to 16S rRNA where it helps nucleate assembly of the platform of the 30S subunit by binding and bridging several RNA helices of the 16S rRNA.</text>
</comment>
<comment type="function">
    <text evidence="1">Forms an intersubunit bridge (bridge B4) with the 23S rRNA of the 50S subunit in the ribosome.</text>
</comment>
<comment type="subunit">
    <text evidence="1">Part of the 30S ribosomal subunit. Forms a bridge to the 50S subunit in the 70S ribosome, contacting the 23S rRNA.</text>
</comment>
<comment type="similarity">
    <text evidence="1">Belongs to the universal ribosomal protein uS15 family.</text>
</comment>
<keyword id="KW-1185">Reference proteome</keyword>
<keyword id="KW-0687">Ribonucleoprotein</keyword>
<keyword id="KW-0689">Ribosomal protein</keyword>
<keyword id="KW-0694">RNA-binding</keyword>
<keyword id="KW-0699">rRNA-binding</keyword>
<dbReference type="EMBL" id="BA000040">
    <property type="protein sequence ID" value="BAC46045.1"/>
    <property type="molecule type" value="Genomic_DNA"/>
</dbReference>
<dbReference type="RefSeq" id="NP_767420.1">
    <property type="nucleotide sequence ID" value="NC_004463.1"/>
</dbReference>
<dbReference type="RefSeq" id="WP_011083602.1">
    <property type="nucleotide sequence ID" value="NC_004463.1"/>
</dbReference>
<dbReference type="SMR" id="Q89WB2"/>
<dbReference type="FunCoup" id="Q89WB2">
    <property type="interactions" value="610"/>
</dbReference>
<dbReference type="STRING" id="224911.AAV28_00750"/>
<dbReference type="EnsemblBacteria" id="BAC46045">
    <property type="protein sequence ID" value="BAC46045"/>
    <property type="gene ID" value="BAC46045"/>
</dbReference>
<dbReference type="GeneID" id="46488056"/>
<dbReference type="KEGG" id="bja:bsl0780"/>
<dbReference type="PATRIC" id="fig|224911.44.peg.155"/>
<dbReference type="eggNOG" id="COG0184">
    <property type="taxonomic scope" value="Bacteria"/>
</dbReference>
<dbReference type="HOGENOM" id="CLU_148518_0_0_5"/>
<dbReference type="InParanoid" id="Q89WB2"/>
<dbReference type="OrthoDB" id="9799262at2"/>
<dbReference type="PhylomeDB" id="Q89WB2"/>
<dbReference type="Proteomes" id="UP000002526">
    <property type="component" value="Chromosome"/>
</dbReference>
<dbReference type="GO" id="GO:0022627">
    <property type="term" value="C:cytosolic small ribosomal subunit"/>
    <property type="evidence" value="ECO:0000318"/>
    <property type="project" value="GO_Central"/>
</dbReference>
<dbReference type="GO" id="GO:0019843">
    <property type="term" value="F:rRNA binding"/>
    <property type="evidence" value="ECO:0007669"/>
    <property type="project" value="UniProtKB-UniRule"/>
</dbReference>
<dbReference type="GO" id="GO:0003735">
    <property type="term" value="F:structural constituent of ribosome"/>
    <property type="evidence" value="ECO:0007669"/>
    <property type="project" value="InterPro"/>
</dbReference>
<dbReference type="GO" id="GO:0006412">
    <property type="term" value="P:translation"/>
    <property type="evidence" value="ECO:0007669"/>
    <property type="project" value="UniProtKB-UniRule"/>
</dbReference>
<dbReference type="CDD" id="cd00353">
    <property type="entry name" value="Ribosomal_S15p_S13e"/>
    <property type="match status" value="1"/>
</dbReference>
<dbReference type="FunFam" id="1.10.287.10:FF:000002">
    <property type="entry name" value="30S ribosomal protein S15"/>
    <property type="match status" value="1"/>
</dbReference>
<dbReference type="Gene3D" id="6.10.250.3130">
    <property type="match status" value="1"/>
</dbReference>
<dbReference type="Gene3D" id="1.10.287.10">
    <property type="entry name" value="S15/NS1, RNA-binding"/>
    <property type="match status" value="1"/>
</dbReference>
<dbReference type="HAMAP" id="MF_01343_B">
    <property type="entry name" value="Ribosomal_uS15_B"/>
    <property type="match status" value="1"/>
</dbReference>
<dbReference type="InterPro" id="IPR000589">
    <property type="entry name" value="Ribosomal_uS15"/>
</dbReference>
<dbReference type="InterPro" id="IPR005290">
    <property type="entry name" value="Ribosomal_uS15_bac-type"/>
</dbReference>
<dbReference type="InterPro" id="IPR009068">
    <property type="entry name" value="uS15_NS1_RNA-bd_sf"/>
</dbReference>
<dbReference type="NCBIfam" id="TIGR00952">
    <property type="entry name" value="S15_bact"/>
    <property type="match status" value="1"/>
</dbReference>
<dbReference type="PANTHER" id="PTHR23321">
    <property type="entry name" value="RIBOSOMAL PROTEIN S15, BACTERIAL AND ORGANELLAR"/>
    <property type="match status" value="1"/>
</dbReference>
<dbReference type="PANTHER" id="PTHR23321:SF26">
    <property type="entry name" value="SMALL RIBOSOMAL SUBUNIT PROTEIN US15M"/>
    <property type="match status" value="1"/>
</dbReference>
<dbReference type="Pfam" id="PF00312">
    <property type="entry name" value="Ribosomal_S15"/>
    <property type="match status" value="1"/>
</dbReference>
<dbReference type="SMART" id="SM01387">
    <property type="entry name" value="Ribosomal_S15"/>
    <property type="match status" value="1"/>
</dbReference>
<dbReference type="SUPFAM" id="SSF47060">
    <property type="entry name" value="S15/NS1 RNA-binding domain"/>
    <property type="match status" value="1"/>
</dbReference>
<dbReference type="PROSITE" id="PS00362">
    <property type="entry name" value="RIBOSOMAL_S15"/>
    <property type="match status" value="1"/>
</dbReference>
<sequence>MSIAAERKAEVIKTNATKAGDTGSPEVQVAILSERINNLTSHFKTHVKDNHSRRGLLKLVSTRRSLLDYLKKRDEARYKALLEKHNIRR</sequence>
<feature type="chain" id="PRO_0000115397" description="Small ribosomal subunit protein uS15">
    <location>
        <begin position="1"/>
        <end position="89"/>
    </location>
</feature>
<feature type="region of interest" description="Disordered" evidence="2">
    <location>
        <begin position="1"/>
        <end position="24"/>
    </location>
</feature>
<feature type="compositionally biased region" description="Basic and acidic residues" evidence="2">
    <location>
        <begin position="1"/>
        <end position="11"/>
    </location>
</feature>
<name>RS15_BRADU</name>